<reference key="1">
    <citation type="journal article" date="2008" name="BMC Genomics">
        <title>Genome sequence and rapid evolution of the rice pathogen Xanthomonas oryzae pv. oryzae PXO99A.</title>
        <authorList>
            <person name="Salzberg S.L."/>
            <person name="Sommer D.D."/>
            <person name="Schatz M.C."/>
            <person name="Phillippy A.M."/>
            <person name="Rabinowicz P.D."/>
            <person name="Tsuge S."/>
            <person name="Furutani A."/>
            <person name="Ochiai H."/>
            <person name="Delcher A.L."/>
            <person name="Kelley D."/>
            <person name="Madupu R."/>
            <person name="Puiu D."/>
            <person name="Radune D."/>
            <person name="Shumway M."/>
            <person name="Trapnell C."/>
            <person name="Aparna G."/>
            <person name="Jha G."/>
            <person name="Pandey A."/>
            <person name="Patil P.B."/>
            <person name="Ishihara H."/>
            <person name="Meyer D.F."/>
            <person name="Szurek B."/>
            <person name="Verdier V."/>
            <person name="Koebnik R."/>
            <person name="Dow J.M."/>
            <person name="Ryan R.P."/>
            <person name="Hirata H."/>
            <person name="Tsuyumu S."/>
            <person name="Won Lee S."/>
            <person name="Seo Y.-S."/>
            <person name="Sriariyanum M."/>
            <person name="Ronald P.C."/>
            <person name="Sonti R.V."/>
            <person name="Van Sluys M.-A."/>
            <person name="Leach J.E."/>
            <person name="White F.F."/>
            <person name="Bogdanove A.J."/>
        </authorList>
    </citation>
    <scope>NUCLEOTIDE SEQUENCE [LARGE SCALE GENOMIC DNA]</scope>
    <source>
        <strain>PXO99A</strain>
    </source>
</reference>
<proteinExistence type="inferred from homology"/>
<dbReference type="EC" id="4.2.3.4" evidence="1"/>
<dbReference type="EMBL" id="CP000967">
    <property type="protein sequence ID" value="ACD60553.1"/>
    <property type="molecule type" value="Genomic_DNA"/>
</dbReference>
<dbReference type="RefSeq" id="WP_011258068.1">
    <property type="nucleotide sequence ID" value="NC_010717.2"/>
</dbReference>
<dbReference type="SMR" id="B2SKP5"/>
<dbReference type="KEGG" id="xop:PXO_02181"/>
<dbReference type="eggNOG" id="COG0337">
    <property type="taxonomic scope" value="Bacteria"/>
</dbReference>
<dbReference type="HOGENOM" id="CLU_001201_0_2_6"/>
<dbReference type="UniPathway" id="UPA00053">
    <property type="reaction ID" value="UER00085"/>
</dbReference>
<dbReference type="Proteomes" id="UP000001740">
    <property type="component" value="Chromosome"/>
</dbReference>
<dbReference type="GO" id="GO:0005737">
    <property type="term" value="C:cytoplasm"/>
    <property type="evidence" value="ECO:0007669"/>
    <property type="project" value="UniProtKB-SubCell"/>
</dbReference>
<dbReference type="GO" id="GO:0003856">
    <property type="term" value="F:3-dehydroquinate synthase activity"/>
    <property type="evidence" value="ECO:0007669"/>
    <property type="project" value="UniProtKB-UniRule"/>
</dbReference>
<dbReference type="GO" id="GO:0046872">
    <property type="term" value="F:metal ion binding"/>
    <property type="evidence" value="ECO:0007669"/>
    <property type="project" value="UniProtKB-KW"/>
</dbReference>
<dbReference type="GO" id="GO:0000166">
    <property type="term" value="F:nucleotide binding"/>
    <property type="evidence" value="ECO:0007669"/>
    <property type="project" value="UniProtKB-KW"/>
</dbReference>
<dbReference type="GO" id="GO:0008652">
    <property type="term" value="P:amino acid biosynthetic process"/>
    <property type="evidence" value="ECO:0007669"/>
    <property type="project" value="UniProtKB-KW"/>
</dbReference>
<dbReference type="GO" id="GO:0009073">
    <property type="term" value="P:aromatic amino acid family biosynthetic process"/>
    <property type="evidence" value="ECO:0007669"/>
    <property type="project" value="UniProtKB-KW"/>
</dbReference>
<dbReference type="GO" id="GO:0009423">
    <property type="term" value="P:chorismate biosynthetic process"/>
    <property type="evidence" value="ECO:0007669"/>
    <property type="project" value="UniProtKB-UniRule"/>
</dbReference>
<dbReference type="CDD" id="cd08195">
    <property type="entry name" value="DHQS"/>
    <property type="match status" value="1"/>
</dbReference>
<dbReference type="FunFam" id="3.40.50.1970:FF:000023">
    <property type="entry name" value="3-dehydroquinate synthase"/>
    <property type="match status" value="1"/>
</dbReference>
<dbReference type="Gene3D" id="3.40.50.1970">
    <property type="match status" value="1"/>
</dbReference>
<dbReference type="Gene3D" id="1.20.1090.10">
    <property type="entry name" value="Dehydroquinate synthase-like - alpha domain"/>
    <property type="match status" value="1"/>
</dbReference>
<dbReference type="HAMAP" id="MF_00110">
    <property type="entry name" value="DHQ_synthase"/>
    <property type="match status" value="1"/>
</dbReference>
<dbReference type="InterPro" id="IPR050071">
    <property type="entry name" value="Dehydroquinate_synthase"/>
</dbReference>
<dbReference type="InterPro" id="IPR016037">
    <property type="entry name" value="DHQ_synth_AroB"/>
</dbReference>
<dbReference type="InterPro" id="IPR030963">
    <property type="entry name" value="DHQ_synth_fam"/>
</dbReference>
<dbReference type="InterPro" id="IPR030960">
    <property type="entry name" value="DHQS/DOIS_N"/>
</dbReference>
<dbReference type="InterPro" id="IPR056179">
    <property type="entry name" value="DHQS_C"/>
</dbReference>
<dbReference type="NCBIfam" id="TIGR01357">
    <property type="entry name" value="aroB"/>
    <property type="match status" value="1"/>
</dbReference>
<dbReference type="PANTHER" id="PTHR43622">
    <property type="entry name" value="3-DEHYDROQUINATE SYNTHASE"/>
    <property type="match status" value="1"/>
</dbReference>
<dbReference type="PANTHER" id="PTHR43622:SF7">
    <property type="entry name" value="3-DEHYDROQUINATE SYNTHASE, CHLOROPLASTIC"/>
    <property type="match status" value="1"/>
</dbReference>
<dbReference type="Pfam" id="PF01761">
    <property type="entry name" value="DHQ_synthase"/>
    <property type="match status" value="1"/>
</dbReference>
<dbReference type="Pfam" id="PF24621">
    <property type="entry name" value="DHQS_C"/>
    <property type="match status" value="1"/>
</dbReference>
<dbReference type="PIRSF" id="PIRSF001455">
    <property type="entry name" value="DHQ_synth"/>
    <property type="match status" value="1"/>
</dbReference>
<dbReference type="SUPFAM" id="SSF56796">
    <property type="entry name" value="Dehydroquinate synthase-like"/>
    <property type="match status" value="1"/>
</dbReference>
<protein>
    <recommendedName>
        <fullName evidence="1">3-dehydroquinate synthase</fullName>
        <shortName evidence="1">DHQS</shortName>
        <ecNumber evidence="1">4.2.3.4</ecNumber>
    </recommendedName>
</protein>
<feature type="chain" id="PRO_1000094655" description="3-dehydroquinate synthase">
    <location>
        <begin position="1"/>
        <end position="370"/>
    </location>
</feature>
<feature type="binding site" evidence="1">
    <location>
        <begin position="112"/>
        <end position="116"/>
    </location>
    <ligand>
        <name>NAD(+)</name>
        <dbReference type="ChEBI" id="CHEBI:57540"/>
    </ligand>
</feature>
<feature type="binding site" evidence="1">
    <location>
        <begin position="136"/>
        <end position="137"/>
    </location>
    <ligand>
        <name>NAD(+)</name>
        <dbReference type="ChEBI" id="CHEBI:57540"/>
    </ligand>
</feature>
<feature type="binding site" evidence="1">
    <location>
        <position position="149"/>
    </location>
    <ligand>
        <name>NAD(+)</name>
        <dbReference type="ChEBI" id="CHEBI:57540"/>
    </ligand>
</feature>
<feature type="binding site" evidence="1">
    <location>
        <position position="158"/>
    </location>
    <ligand>
        <name>NAD(+)</name>
        <dbReference type="ChEBI" id="CHEBI:57540"/>
    </ligand>
</feature>
<feature type="binding site" evidence="1">
    <location>
        <begin position="176"/>
        <end position="179"/>
    </location>
    <ligand>
        <name>NAD(+)</name>
        <dbReference type="ChEBI" id="CHEBI:57540"/>
    </ligand>
</feature>
<feature type="binding site" evidence="1">
    <location>
        <position position="191"/>
    </location>
    <ligand>
        <name>Zn(2+)</name>
        <dbReference type="ChEBI" id="CHEBI:29105"/>
    </ligand>
</feature>
<feature type="binding site" evidence="1">
    <location>
        <position position="254"/>
    </location>
    <ligand>
        <name>Zn(2+)</name>
        <dbReference type="ChEBI" id="CHEBI:29105"/>
    </ligand>
</feature>
<feature type="binding site" evidence="1">
    <location>
        <position position="276"/>
    </location>
    <ligand>
        <name>Zn(2+)</name>
        <dbReference type="ChEBI" id="CHEBI:29105"/>
    </ligand>
</feature>
<evidence type="ECO:0000255" key="1">
    <source>
        <dbReference type="HAMAP-Rule" id="MF_00110"/>
    </source>
</evidence>
<gene>
    <name evidence="1" type="primary">aroB</name>
    <name type="ordered locus">PXO_02181</name>
</gene>
<keyword id="KW-0028">Amino-acid biosynthesis</keyword>
<keyword id="KW-0057">Aromatic amino acid biosynthesis</keyword>
<keyword id="KW-0170">Cobalt</keyword>
<keyword id="KW-0963">Cytoplasm</keyword>
<keyword id="KW-0456">Lyase</keyword>
<keyword id="KW-0479">Metal-binding</keyword>
<keyword id="KW-0520">NAD</keyword>
<keyword id="KW-0547">Nucleotide-binding</keyword>
<keyword id="KW-0862">Zinc</keyword>
<name>AROB_XANOP</name>
<organism>
    <name type="scientific">Xanthomonas oryzae pv. oryzae (strain PXO99A)</name>
    <dbReference type="NCBI Taxonomy" id="360094"/>
    <lineage>
        <taxon>Bacteria</taxon>
        <taxon>Pseudomonadati</taxon>
        <taxon>Pseudomonadota</taxon>
        <taxon>Gammaproteobacteria</taxon>
        <taxon>Lysobacterales</taxon>
        <taxon>Lysobacteraceae</taxon>
        <taxon>Xanthomonas</taxon>
    </lineage>
</organism>
<sequence>MTLPRSSRSVAVDGAQPYTITIAPGLLADDARLARHVRGRHALLLSDSQVAPHYAAGVRAALLSARPDLQIGELVIAAGEASKTLDTFGSAITALAELGATRDACVFALGGGVVGDLAGFAAACWMRGVDCVQLPTSLLAMVDSSVGGKTAVDIPQGKNLVGAFHPPRAVLADTDTLRTLPARELRAGLAEVIKYGAIRDPLFFQWLHAERHALLDSDPAALAQAIARSCEHKAEIVARDPLEKGERALLNLGHTFGHAIETEQGYGAPGNDNLNHGEAVAVGMVLAARLSATLGMSDAQDTEALRALLHDFELPTDIPPGLPPEALLARMRLDKKNIAGRLRLVLWRGIGKAEVVPDVEEAAVLKILAG</sequence>
<accession>B2SKP5</accession>
<comment type="function">
    <text evidence="1">Catalyzes the conversion of 3-deoxy-D-arabino-heptulosonate 7-phosphate (DAHP) to dehydroquinate (DHQ).</text>
</comment>
<comment type="catalytic activity">
    <reaction evidence="1">
        <text>7-phospho-2-dehydro-3-deoxy-D-arabino-heptonate = 3-dehydroquinate + phosphate</text>
        <dbReference type="Rhea" id="RHEA:21968"/>
        <dbReference type="ChEBI" id="CHEBI:32364"/>
        <dbReference type="ChEBI" id="CHEBI:43474"/>
        <dbReference type="ChEBI" id="CHEBI:58394"/>
        <dbReference type="EC" id="4.2.3.4"/>
    </reaction>
</comment>
<comment type="cofactor">
    <cofactor evidence="1">
        <name>Co(2+)</name>
        <dbReference type="ChEBI" id="CHEBI:48828"/>
    </cofactor>
    <cofactor evidence="1">
        <name>Zn(2+)</name>
        <dbReference type="ChEBI" id="CHEBI:29105"/>
    </cofactor>
    <text evidence="1">Binds 1 divalent metal cation per subunit. Can use either Co(2+) or Zn(2+).</text>
</comment>
<comment type="cofactor">
    <cofactor evidence="1">
        <name>NAD(+)</name>
        <dbReference type="ChEBI" id="CHEBI:57540"/>
    </cofactor>
</comment>
<comment type="pathway">
    <text evidence="1">Metabolic intermediate biosynthesis; chorismate biosynthesis; chorismate from D-erythrose 4-phosphate and phosphoenolpyruvate: step 2/7.</text>
</comment>
<comment type="subcellular location">
    <subcellularLocation>
        <location evidence="1">Cytoplasm</location>
    </subcellularLocation>
</comment>
<comment type="similarity">
    <text evidence="1">Belongs to the sugar phosphate cyclases superfamily. Dehydroquinate synthase family.</text>
</comment>